<proteinExistence type="inferred from homology"/>
<comment type="similarity">
    <text evidence="3">Belongs to the AB hydrolase superfamily.</text>
</comment>
<comment type="sequence caution" evidence="3">
    <conflict type="erroneous initiation">
        <sequence resource="EMBL-CDS" id="BAA08960"/>
    </conflict>
</comment>
<organism>
    <name type="scientific">Bacillus subtilis (strain 168)</name>
    <dbReference type="NCBI Taxonomy" id="224308"/>
    <lineage>
        <taxon>Bacteria</taxon>
        <taxon>Bacillati</taxon>
        <taxon>Bacillota</taxon>
        <taxon>Bacilli</taxon>
        <taxon>Bacillales</taxon>
        <taxon>Bacillaceae</taxon>
        <taxon>Bacillus</taxon>
    </lineage>
</organism>
<sequence length="284" mass="31740">MKRRVETITFDGGTLEYSVTGKGTPILVMHGGHSNCYEEFGYTALIEQGYSIITPSRPGYGRTSKEIGKSLANACRFYVKLLDHLQIESVHVIAISAGGPSGICFASHYPERVNTLTLQSAVTKEWLTPKDTEYKLGEILFRPPVEKWIWKLISSLNNAFPRLMFRAMSPQFSTLPFQRIKSLMNEKDIEAFRKMNSRQRSGEGFLIDLSQTAAVSLKDLQAIICPVLIMQSVYDGLVDLSHAHHAKEHIRGAVLCLLHSWGHLIWLGKEAAETGSILLGFLES</sequence>
<protein>
    <recommendedName>
        <fullName>Uncharacterized hydrolase YcgS</fullName>
        <ecNumber>3.-.-.-</ecNumber>
    </recommendedName>
</protein>
<feature type="chain" id="PRO_0000360609" description="Uncharacterized hydrolase YcgS">
    <location>
        <begin position="1"/>
        <end position="284"/>
    </location>
</feature>
<feature type="domain" description="AB hydrolase-1" evidence="2">
    <location>
        <begin position="25"/>
        <end position="123"/>
    </location>
</feature>
<feature type="active site" evidence="1">
    <location>
        <position position="96"/>
    </location>
</feature>
<dbReference type="EC" id="3.-.-.-"/>
<dbReference type="EMBL" id="D50453">
    <property type="protein sequence ID" value="BAA08960.1"/>
    <property type="status" value="ALT_INIT"/>
    <property type="molecule type" value="Genomic_DNA"/>
</dbReference>
<dbReference type="EMBL" id="AL009126">
    <property type="protein sequence ID" value="CAB12120.1"/>
    <property type="molecule type" value="Genomic_DNA"/>
</dbReference>
<dbReference type="PIR" id="F69759">
    <property type="entry name" value="F69759"/>
</dbReference>
<dbReference type="RefSeq" id="NP_388208.1">
    <property type="nucleotide sequence ID" value="NC_000964.3"/>
</dbReference>
<dbReference type="RefSeq" id="WP_003246384.1">
    <property type="nucleotide sequence ID" value="NZ_OZ025638.1"/>
</dbReference>
<dbReference type="SMR" id="P94396"/>
<dbReference type="FunCoup" id="P94396">
    <property type="interactions" value="66"/>
</dbReference>
<dbReference type="STRING" id="224308.BSU03260"/>
<dbReference type="ESTHER" id="bacsu-ycgS">
    <property type="family name" value="AlphaBeta_hydrolase"/>
</dbReference>
<dbReference type="PaxDb" id="224308-BSU03260"/>
<dbReference type="EnsemblBacteria" id="CAB12120">
    <property type="protein sequence ID" value="CAB12120"/>
    <property type="gene ID" value="BSU_03260"/>
</dbReference>
<dbReference type="GeneID" id="938332"/>
<dbReference type="KEGG" id="bsu:BSU03260"/>
<dbReference type="PATRIC" id="fig|224308.179.peg.340"/>
<dbReference type="eggNOG" id="COG2267">
    <property type="taxonomic scope" value="Bacteria"/>
</dbReference>
<dbReference type="InParanoid" id="P94396"/>
<dbReference type="OrthoDB" id="9773293at2"/>
<dbReference type="PhylomeDB" id="P94396"/>
<dbReference type="BioCyc" id="BSUB:BSU03260-MONOMER"/>
<dbReference type="Proteomes" id="UP000001570">
    <property type="component" value="Chromosome"/>
</dbReference>
<dbReference type="GO" id="GO:0016787">
    <property type="term" value="F:hydrolase activity"/>
    <property type="evidence" value="ECO:0007669"/>
    <property type="project" value="UniProtKB-KW"/>
</dbReference>
<dbReference type="Gene3D" id="3.40.50.1820">
    <property type="entry name" value="alpha/beta hydrolase"/>
    <property type="match status" value="1"/>
</dbReference>
<dbReference type="InterPro" id="IPR050471">
    <property type="entry name" value="AB_hydrolase"/>
</dbReference>
<dbReference type="InterPro" id="IPR000073">
    <property type="entry name" value="AB_hydrolase_1"/>
</dbReference>
<dbReference type="InterPro" id="IPR029058">
    <property type="entry name" value="AB_hydrolase_fold"/>
</dbReference>
<dbReference type="PANTHER" id="PTHR43433:SF1">
    <property type="entry name" value="BLL5160 PROTEIN"/>
    <property type="match status" value="1"/>
</dbReference>
<dbReference type="PANTHER" id="PTHR43433">
    <property type="entry name" value="HYDROLASE, ALPHA/BETA FOLD FAMILY PROTEIN"/>
    <property type="match status" value="1"/>
</dbReference>
<dbReference type="Pfam" id="PF00561">
    <property type="entry name" value="Abhydrolase_1"/>
    <property type="match status" value="1"/>
</dbReference>
<dbReference type="PRINTS" id="PR00111">
    <property type="entry name" value="ABHYDROLASE"/>
</dbReference>
<dbReference type="SUPFAM" id="SSF53474">
    <property type="entry name" value="alpha/beta-Hydrolases"/>
    <property type="match status" value="1"/>
</dbReference>
<keyword id="KW-0378">Hydrolase</keyword>
<keyword id="KW-1185">Reference proteome</keyword>
<reference key="1">
    <citation type="journal article" date="1996" name="Microbiology">
        <title>The 25 degrees-36 degrees region of the Bacillus subtilis chromosome: determination of the sequence of a 146 kb segment and identification of 113 genes.</title>
        <authorList>
            <person name="Yamane K."/>
            <person name="Kumano M."/>
            <person name="Kurita K."/>
        </authorList>
    </citation>
    <scope>NUCLEOTIDE SEQUENCE [GENOMIC DNA]</scope>
    <source>
        <strain>168</strain>
    </source>
</reference>
<reference key="2">
    <citation type="journal article" date="1997" name="Nature">
        <title>The complete genome sequence of the Gram-positive bacterium Bacillus subtilis.</title>
        <authorList>
            <person name="Kunst F."/>
            <person name="Ogasawara N."/>
            <person name="Moszer I."/>
            <person name="Albertini A.M."/>
            <person name="Alloni G."/>
            <person name="Azevedo V."/>
            <person name="Bertero M.G."/>
            <person name="Bessieres P."/>
            <person name="Bolotin A."/>
            <person name="Borchert S."/>
            <person name="Borriss R."/>
            <person name="Boursier L."/>
            <person name="Brans A."/>
            <person name="Braun M."/>
            <person name="Brignell S.C."/>
            <person name="Bron S."/>
            <person name="Brouillet S."/>
            <person name="Bruschi C.V."/>
            <person name="Caldwell B."/>
            <person name="Capuano V."/>
            <person name="Carter N.M."/>
            <person name="Choi S.-K."/>
            <person name="Codani J.-J."/>
            <person name="Connerton I.F."/>
            <person name="Cummings N.J."/>
            <person name="Daniel R.A."/>
            <person name="Denizot F."/>
            <person name="Devine K.M."/>
            <person name="Duesterhoeft A."/>
            <person name="Ehrlich S.D."/>
            <person name="Emmerson P.T."/>
            <person name="Entian K.-D."/>
            <person name="Errington J."/>
            <person name="Fabret C."/>
            <person name="Ferrari E."/>
            <person name="Foulger D."/>
            <person name="Fritz C."/>
            <person name="Fujita M."/>
            <person name="Fujita Y."/>
            <person name="Fuma S."/>
            <person name="Galizzi A."/>
            <person name="Galleron N."/>
            <person name="Ghim S.-Y."/>
            <person name="Glaser P."/>
            <person name="Goffeau A."/>
            <person name="Golightly E.J."/>
            <person name="Grandi G."/>
            <person name="Guiseppi G."/>
            <person name="Guy B.J."/>
            <person name="Haga K."/>
            <person name="Haiech J."/>
            <person name="Harwood C.R."/>
            <person name="Henaut A."/>
            <person name="Hilbert H."/>
            <person name="Holsappel S."/>
            <person name="Hosono S."/>
            <person name="Hullo M.-F."/>
            <person name="Itaya M."/>
            <person name="Jones L.-M."/>
            <person name="Joris B."/>
            <person name="Karamata D."/>
            <person name="Kasahara Y."/>
            <person name="Klaerr-Blanchard M."/>
            <person name="Klein C."/>
            <person name="Kobayashi Y."/>
            <person name="Koetter P."/>
            <person name="Koningstein G."/>
            <person name="Krogh S."/>
            <person name="Kumano M."/>
            <person name="Kurita K."/>
            <person name="Lapidus A."/>
            <person name="Lardinois S."/>
            <person name="Lauber J."/>
            <person name="Lazarevic V."/>
            <person name="Lee S.-M."/>
            <person name="Levine A."/>
            <person name="Liu H."/>
            <person name="Masuda S."/>
            <person name="Mauel C."/>
            <person name="Medigue C."/>
            <person name="Medina N."/>
            <person name="Mellado R.P."/>
            <person name="Mizuno M."/>
            <person name="Moestl D."/>
            <person name="Nakai S."/>
            <person name="Noback M."/>
            <person name="Noone D."/>
            <person name="O'Reilly M."/>
            <person name="Ogawa K."/>
            <person name="Ogiwara A."/>
            <person name="Oudega B."/>
            <person name="Park S.-H."/>
            <person name="Parro V."/>
            <person name="Pohl T.M."/>
            <person name="Portetelle D."/>
            <person name="Porwollik S."/>
            <person name="Prescott A.M."/>
            <person name="Presecan E."/>
            <person name="Pujic P."/>
            <person name="Purnelle B."/>
            <person name="Rapoport G."/>
            <person name="Rey M."/>
            <person name="Reynolds S."/>
            <person name="Rieger M."/>
            <person name="Rivolta C."/>
            <person name="Rocha E."/>
            <person name="Roche B."/>
            <person name="Rose M."/>
            <person name="Sadaie Y."/>
            <person name="Sato T."/>
            <person name="Scanlan E."/>
            <person name="Schleich S."/>
            <person name="Schroeter R."/>
            <person name="Scoffone F."/>
            <person name="Sekiguchi J."/>
            <person name="Sekowska A."/>
            <person name="Seror S.J."/>
            <person name="Serror P."/>
            <person name="Shin B.-S."/>
            <person name="Soldo B."/>
            <person name="Sorokin A."/>
            <person name="Tacconi E."/>
            <person name="Takagi T."/>
            <person name="Takahashi H."/>
            <person name="Takemaru K."/>
            <person name="Takeuchi M."/>
            <person name="Tamakoshi A."/>
            <person name="Tanaka T."/>
            <person name="Terpstra P."/>
            <person name="Tognoni A."/>
            <person name="Tosato V."/>
            <person name="Uchiyama S."/>
            <person name="Vandenbol M."/>
            <person name="Vannier F."/>
            <person name="Vassarotti A."/>
            <person name="Viari A."/>
            <person name="Wambutt R."/>
            <person name="Wedler E."/>
            <person name="Wedler H."/>
            <person name="Weitzenegger T."/>
            <person name="Winters P."/>
            <person name="Wipat A."/>
            <person name="Yamamoto H."/>
            <person name="Yamane K."/>
            <person name="Yasumoto K."/>
            <person name="Yata K."/>
            <person name="Yoshida K."/>
            <person name="Yoshikawa H.-F."/>
            <person name="Zumstein E."/>
            <person name="Yoshikawa H."/>
            <person name="Danchin A."/>
        </authorList>
    </citation>
    <scope>NUCLEOTIDE SEQUENCE [LARGE SCALE GENOMIC DNA]</scope>
    <source>
        <strain>168</strain>
    </source>
</reference>
<gene>
    <name type="primary">ycgS</name>
    <name type="ordered locus">BSU03260</name>
</gene>
<accession>P94396</accession>
<accession>Q79F34</accession>
<evidence type="ECO:0000250" key="1"/>
<evidence type="ECO:0000255" key="2"/>
<evidence type="ECO:0000305" key="3"/>
<name>YCGS_BACSU</name>